<reference key="1">
    <citation type="journal article" date="2006" name="PLoS Genet.">
        <title>The complete genome sequence and comparative genome analysis of the high pathogenicity Yersinia enterocolitica strain 8081.</title>
        <authorList>
            <person name="Thomson N.R."/>
            <person name="Howard S."/>
            <person name="Wren B.W."/>
            <person name="Holden M.T.G."/>
            <person name="Crossman L."/>
            <person name="Challis G.L."/>
            <person name="Churcher C."/>
            <person name="Mungall K."/>
            <person name="Brooks K."/>
            <person name="Chillingworth T."/>
            <person name="Feltwell T."/>
            <person name="Abdellah Z."/>
            <person name="Hauser H."/>
            <person name="Jagels K."/>
            <person name="Maddison M."/>
            <person name="Moule S."/>
            <person name="Sanders M."/>
            <person name="Whitehead S."/>
            <person name="Quail M.A."/>
            <person name="Dougan G."/>
            <person name="Parkhill J."/>
            <person name="Prentice M.B."/>
        </authorList>
    </citation>
    <scope>NUCLEOTIDE SEQUENCE [LARGE SCALE GENOMIC DNA]</scope>
    <source>
        <strain>NCTC 13174 / 8081</strain>
    </source>
</reference>
<feature type="chain" id="PRO_1000021364" description="Shikimate dehydrogenase (NADP(+))">
    <location>
        <begin position="1"/>
        <end position="273"/>
    </location>
</feature>
<feature type="active site" description="Proton acceptor" evidence="1">
    <location>
        <position position="66"/>
    </location>
</feature>
<feature type="binding site" evidence="1">
    <location>
        <begin position="15"/>
        <end position="17"/>
    </location>
    <ligand>
        <name>shikimate</name>
        <dbReference type="ChEBI" id="CHEBI:36208"/>
    </ligand>
</feature>
<feature type="binding site" evidence="1">
    <location>
        <position position="62"/>
    </location>
    <ligand>
        <name>shikimate</name>
        <dbReference type="ChEBI" id="CHEBI:36208"/>
    </ligand>
</feature>
<feature type="binding site" evidence="1">
    <location>
        <position position="78"/>
    </location>
    <ligand>
        <name>NADP(+)</name>
        <dbReference type="ChEBI" id="CHEBI:58349"/>
    </ligand>
</feature>
<feature type="binding site" evidence="1">
    <location>
        <position position="87"/>
    </location>
    <ligand>
        <name>shikimate</name>
        <dbReference type="ChEBI" id="CHEBI:36208"/>
    </ligand>
</feature>
<feature type="binding site" evidence="1">
    <location>
        <position position="103"/>
    </location>
    <ligand>
        <name>shikimate</name>
        <dbReference type="ChEBI" id="CHEBI:36208"/>
    </ligand>
</feature>
<feature type="binding site" evidence="1">
    <location>
        <begin position="127"/>
        <end position="131"/>
    </location>
    <ligand>
        <name>NADP(+)</name>
        <dbReference type="ChEBI" id="CHEBI:58349"/>
    </ligand>
</feature>
<feature type="binding site" evidence="1">
    <location>
        <begin position="150"/>
        <end position="155"/>
    </location>
    <ligand>
        <name>NADP(+)</name>
        <dbReference type="ChEBI" id="CHEBI:58349"/>
    </ligand>
</feature>
<feature type="binding site" evidence="1">
    <location>
        <position position="214"/>
    </location>
    <ligand>
        <name>NADP(+)</name>
        <dbReference type="ChEBI" id="CHEBI:58349"/>
    </ligand>
</feature>
<feature type="binding site" evidence="1">
    <location>
        <position position="216"/>
    </location>
    <ligand>
        <name>shikimate</name>
        <dbReference type="ChEBI" id="CHEBI:36208"/>
    </ligand>
</feature>
<feature type="binding site" evidence="1">
    <location>
        <position position="238"/>
    </location>
    <ligand>
        <name>NADP(+)</name>
        <dbReference type="ChEBI" id="CHEBI:58349"/>
    </ligand>
</feature>
<gene>
    <name evidence="1" type="primary">aroE</name>
    <name type="ordered locus">YE3884</name>
</gene>
<protein>
    <recommendedName>
        <fullName evidence="1">Shikimate dehydrogenase (NADP(+))</fullName>
        <shortName evidence="1">SDH</shortName>
        <ecNumber evidence="1">1.1.1.25</ecNumber>
    </recommendedName>
</protein>
<organism>
    <name type="scientific">Yersinia enterocolitica serotype O:8 / biotype 1B (strain NCTC 13174 / 8081)</name>
    <dbReference type="NCBI Taxonomy" id="393305"/>
    <lineage>
        <taxon>Bacteria</taxon>
        <taxon>Pseudomonadati</taxon>
        <taxon>Pseudomonadota</taxon>
        <taxon>Gammaproteobacteria</taxon>
        <taxon>Enterobacterales</taxon>
        <taxon>Yersiniaceae</taxon>
        <taxon>Yersinia</taxon>
    </lineage>
</organism>
<evidence type="ECO:0000255" key="1">
    <source>
        <dbReference type="HAMAP-Rule" id="MF_00222"/>
    </source>
</evidence>
<accession>A1JRY4</accession>
<sequence length="273" mass="29599">MDQKFAVFGNPIGHSKSPRIHALFAEQTGIEHCYGMVLAPNETFEETLTSFFAGGAIGANITTPFKERAHAKCDELTDRASLAGAVNTIKQLKDGRLLGDNTDGIGLLSDLERQHLIQTTDHILLVGAGGAARGVILPLLSYGCKVVITNRTYARAQQLAEVFHHLGDIDAVEMQDLSGQPFDLIINATASGIHGEVPNLPMDIISPQTRCYDMFYQADSTPFLAWSTRLGVTSYADGLGMLVGQAAHAFQLWHGVMPEITPVLNQLRDELAK</sequence>
<keyword id="KW-0028">Amino-acid biosynthesis</keyword>
<keyword id="KW-0057">Aromatic amino acid biosynthesis</keyword>
<keyword id="KW-0521">NADP</keyword>
<keyword id="KW-0560">Oxidoreductase</keyword>
<name>AROE_YERE8</name>
<dbReference type="EC" id="1.1.1.25" evidence="1"/>
<dbReference type="EMBL" id="AM286415">
    <property type="protein sequence ID" value="CAL13903.1"/>
    <property type="molecule type" value="Genomic_DNA"/>
</dbReference>
<dbReference type="RefSeq" id="WP_005174590.1">
    <property type="nucleotide sequence ID" value="NC_008800.1"/>
</dbReference>
<dbReference type="RefSeq" id="YP_001008029.1">
    <property type="nucleotide sequence ID" value="NC_008800.1"/>
</dbReference>
<dbReference type="SMR" id="A1JRY4"/>
<dbReference type="KEGG" id="yen:YE3884"/>
<dbReference type="PATRIC" id="fig|393305.7.peg.4133"/>
<dbReference type="eggNOG" id="COG0169">
    <property type="taxonomic scope" value="Bacteria"/>
</dbReference>
<dbReference type="HOGENOM" id="CLU_044063_2_1_6"/>
<dbReference type="OrthoDB" id="9776868at2"/>
<dbReference type="UniPathway" id="UPA00053">
    <property type="reaction ID" value="UER00087"/>
</dbReference>
<dbReference type="Proteomes" id="UP000000642">
    <property type="component" value="Chromosome"/>
</dbReference>
<dbReference type="GO" id="GO:0005829">
    <property type="term" value="C:cytosol"/>
    <property type="evidence" value="ECO:0007669"/>
    <property type="project" value="TreeGrafter"/>
</dbReference>
<dbReference type="GO" id="GO:0050661">
    <property type="term" value="F:NADP binding"/>
    <property type="evidence" value="ECO:0007669"/>
    <property type="project" value="InterPro"/>
</dbReference>
<dbReference type="GO" id="GO:0004764">
    <property type="term" value="F:shikimate 3-dehydrogenase (NADP+) activity"/>
    <property type="evidence" value="ECO:0007669"/>
    <property type="project" value="UniProtKB-UniRule"/>
</dbReference>
<dbReference type="GO" id="GO:0008652">
    <property type="term" value="P:amino acid biosynthetic process"/>
    <property type="evidence" value="ECO:0007669"/>
    <property type="project" value="UniProtKB-KW"/>
</dbReference>
<dbReference type="GO" id="GO:0009073">
    <property type="term" value="P:aromatic amino acid family biosynthetic process"/>
    <property type="evidence" value="ECO:0007669"/>
    <property type="project" value="UniProtKB-KW"/>
</dbReference>
<dbReference type="GO" id="GO:0009423">
    <property type="term" value="P:chorismate biosynthetic process"/>
    <property type="evidence" value="ECO:0007669"/>
    <property type="project" value="UniProtKB-UniRule"/>
</dbReference>
<dbReference type="GO" id="GO:0019632">
    <property type="term" value="P:shikimate metabolic process"/>
    <property type="evidence" value="ECO:0007669"/>
    <property type="project" value="InterPro"/>
</dbReference>
<dbReference type="CDD" id="cd01065">
    <property type="entry name" value="NAD_bind_Shikimate_DH"/>
    <property type="match status" value="1"/>
</dbReference>
<dbReference type="FunFam" id="3.40.50.10860:FF:000006">
    <property type="entry name" value="Shikimate dehydrogenase (NADP(+))"/>
    <property type="match status" value="1"/>
</dbReference>
<dbReference type="FunFam" id="3.40.50.720:FF:000104">
    <property type="entry name" value="Shikimate dehydrogenase (NADP(+))"/>
    <property type="match status" value="1"/>
</dbReference>
<dbReference type="Gene3D" id="3.40.50.10860">
    <property type="entry name" value="Leucine Dehydrogenase, chain A, domain 1"/>
    <property type="match status" value="1"/>
</dbReference>
<dbReference type="Gene3D" id="3.40.50.720">
    <property type="entry name" value="NAD(P)-binding Rossmann-like Domain"/>
    <property type="match status" value="1"/>
</dbReference>
<dbReference type="HAMAP" id="MF_00222">
    <property type="entry name" value="Shikimate_DH_AroE"/>
    <property type="match status" value="1"/>
</dbReference>
<dbReference type="InterPro" id="IPR046346">
    <property type="entry name" value="Aminoacid_DH-like_N_sf"/>
</dbReference>
<dbReference type="InterPro" id="IPR036291">
    <property type="entry name" value="NAD(P)-bd_dom_sf"/>
</dbReference>
<dbReference type="InterPro" id="IPR041121">
    <property type="entry name" value="SDH_C"/>
</dbReference>
<dbReference type="InterPro" id="IPR011342">
    <property type="entry name" value="Shikimate_DH"/>
</dbReference>
<dbReference type="InterPro" id="IPR013708">
    <property type="entry name" value="Shikimate_DH-bd_N"/>
</dbReference>
<dbReference type="InterPro" id="IPR022893">
    <property type="entry name" value="Shikimate_DH_fam"/>
</dbReference>
<dbReference type="InterPro" id="IPR006151">
    <property type="entry name" value="Shikm_DH/Glu-tRNA_Rdtase"/>
</dbReference>
<dbReference type="NCBIfam" id="TIGR00507">
    <property type="entry name" value="aroE"/>
    <property type="match status" value="1"/>
</dbReference>
<dbReference type="NCBIfam" id="NF001310">
    <property type="entry name" value="PRK00258.1-2"/>
    <property type="match status" value="1"/>
</dbReference>
<dbReference type="PANTHER" id="PTHR21089:SF1">
    <property type="entry name" value="BIFUNCTIONAL 3-DEHYDROQUINATE DEHYDRATASE_SHIKIMATE DEHYDROGENASE, CHLOROPLASTIC"/>
    <property type="match status" value="1"/>
</dbReference>
<dbReference type="PANTHER" id="PTHR21089">
    <property type="entry name" value="SHIKIMATE DEHYDROGENASE"/>
    <property type="match status" value="1"/>
</dbReference>
<dbReference type="Pfam" id="PF18317">
    <property type="entry name" value="SDH_C"/>
    <property type="match status" value="1"/>
</dbReference>
<dbReference type="Pfam" id="PF01488">
    <property type="entry name" value="Shikimate_DH"/>
    <property type="match status" value="1"/>
</dbReference>
<dbReference type="Pfam" id="PF08501">
    <property type="entry name" value="Shikimate_dh_N"/>
    <property type="match status" value="1"/>
</dbReference>
<dbReference type="SUPFAM" id="SSF53223">
    <property type="entry name" value="Aminoacid dehydrogenase-like, N-terminal domain"/>
    <property type="match status" value="1"/>
</dbReference>
<dbReference type="SUPFAM" id="SSF51735">
    <property type="entry name" value="NAD(P)-binding Rossmann-fold domains"/>
    <property type="match status" value="1"/>
</dbReference>
<comment type="function">
    <text evidence="1">Involved in the biosynthesis of the chorismate, which leads to the biosynthesis of aromatic amino acids. Catalyzes the reversible NADPH linked reduction of 3-dehydroshikimate (DHSA) to yield shikimate (SA).</text>
</comment>
<comment type="catalytic activity">
    <reaction evidence="1">
        <text>shikimate + NADP(+) = 3-dehydroshikimate + NADPH + H(+)</text>
        <dbReference type="Rhea" id="RHEA:17737"/>
        <dbReference type="ChEBI" id="CHEBI:15378"/>
        <dbReference type="ChEBI" id="CHEBI:16630"/>
        <dbReference type="ChEBI" id="CHEBI:36208"/>
        <dbReference type="ChEBI" id="CHEBI:57783"/>
        <dbReference type="ChEBI" id="CHEBI:58349"/>
        <dbReference type="EC" id="1.1.1.25"/>
    </reaction>
</comment>
<comment type="pathway">
    <text evidence="1">Metabolic intermediate biosynthesis; chorismate biosynthesis; chorismate from D-erythrose 4-phosphate and phosphoenolpyruvate: step 4/7.</text>
</comment>
<comment type="subunit">
    <text evidence="1">Homodimer.</text>
</comment>
<comment type="similarity">
    <text evidence="1">Belongs to the shikimate dehydrogenase family.</text>
</comment>
<proteinExistence type="inferred from homology"/>